<evidence type="ECO:0000250" key="1">
    <source>
        <dbReference type="UniProtKB" id="Q9H488"/>
    </source>
</evidence>
<evidence type="ECO:0000255" key="2"/>
<evidence type="ECO:0000255" key="3">
    <source>
        <dbReference type="PROSITE-ProRule" id="PRU00498"/>
    </source>
</evidence>
<evidence type="ECO:0000269" key="4">
    <source>
    </source>
</evidence>
<evidence type="ECO:0000303" key="5">
    <source>
    </source>
</evidence>
<evidence type="ECO:0000305" key="6"/>
<evidence type="ECO:0000305" key="7">
    <source>
    </source>
</evidence>
<evidence type="ECO:0000312" key="8">
    <source>
        <dbReference type="Araport" id="AT5G15740"/>
    </source>
</evidence>
<evidence type="ECO:0000312" key="9">
    <source>
        <dbReference type="EMBL" id="ARJ31449.1"/>
    </source>
</evidence>
<evidence type="ECO:0000312" key="10">
    <source>
        <dbReference type="EMBL" id="CAC01773.1"/>
    </source>
</evidence>
<protein>
    <recommendedName>
        <fullName evidence="5">Rhamnogalacturonan I rhamnosyltransferase 1</fullName>
        <ecNumber evidence="4">2.4.1.351</ecNumber>
    </recommendedName>
    <alternativeName>
        <fullName evidence="6">O-fucosyltransferase 34</fullName>
        <shortName evidence="6">O-FucT-34</shortName>
    </alternativeName>
    <alternativeName>
        <fullName evidence="9">O-fucosyltransferase family protein</fullName>
    </alternativeName>
</protein>
<dbReference type="EC" id="2.4.1.351" evidence="4"/>
<dbReference type="EMBL" id="KY906085">
    <property type="protein sequence ID" value="ARJ31449.1"/>
    <property type="molecule type" value="mRNA"/>
</dbReference>
<dbReference type="EMBL" id="AL391144">
    <property type="protein sequence ID" value="CAC01773.1"/>
    <property type="status" value="ALT_INIT"/>
    <property type="molecule type" value="Genomic_DNA"/>
</dbReference>
<dbReference type="EMBL" id="CP002688">
    <property type="protein sequence ID" value="AED92200.1"/>
    <property type="molecule type" value="Genomic_DNA"/>
</dbReference>
<dbReference type="EMBL" id="BT023458">
    <property type="protein sequence ID" value="AAY56449.1"/>
    <property type="molecule type" value="mRNA"/>
</dbReference>
<dbReference type="EMBL" id="AK227710">
    <property type="protein sequence ID" value="BAE99696.1"/>
    <property type="molecule type" value="mRNA"/>
</dbReference>
<dbReference type="PIR" id="T51403">
    <property type="entry name" value="T51403"/>
</dbReference>
<dbReference type="RefSeq" id="NP_197078.2">
    <property type="nucleotide sequence ID" value="NM_121579.4"/>
</dbReference>
<dbReference type="FunCoup" id="Q4V398">
    <property type="interactions" value="500"/>
</dbReference>
<dbReference type="STRING" id="3702.Q4V398"/>
<dbReference type="GlyCosmos" id="Q4V398">
    <property type="glycosylation" value="4 sites, No reported glycans"/>
</dbReference>
<dbReference type="GlyGen" id="Q4V398">
    <property type="glycosylation" value="4 sites"/>
</dbReference>
<dbReference type="PaxDb" id="3702-AT5G15740.1"/>
<dbReference type="ProteomicsDB" id="236199"/>
<dbReference type="EnsemblPlants" id="AT5G15740.1">
    <property type="protein sequence ID" value="AT5G15740.1"/>
    <property type="gene ID" value="AT5G15740"/>
</dbReference>
<dbReference type="GeneID" id="831430"/>
<dbReference type="Gramene" id="AT5G15740.1">
    <property type="protein sequence ID" value="AT5G15740.1"/>
    <property type="gene ID" value="AT5G15740"/>
</dbReference>
<dbReference type="KEGG" id="ath:AT5G15740"/>
<dbReference type="Araport" id="AT5G15740"/>
<dbReference type="TAIR" id="AT5G15740">
    <property type="gene designation" value="RRT1"/>
</dbReference>
<dbReference type="eggNOG" id="ENOG502QRT0">
    <property type="taxonomic scope" value="Eukaryota"/>
</dbReference>
<dbReference type="HOGENOM" id="CLU_018420_0_0_1"/>
<dbReference type="InParanoid" id="Q4V398"/>
<dbReference type="OMA" id="WDVFSST"/>
<dbReference type="OrthoDB" id="1874781at2759"/>
<dbReference type="PhylomeDB" id="Q4V398"/>
<dbReference type="UniPathway" id="UPA00845"/>
<dbReference type="PRO" id="PR:Q4V398"/>
<dbReference type="Proteomes" id="UP000006548">
    <property type="component" value="Chromosome 5"/>
</dbReference>
<dbReference type="ExpressionAtlas" id="Q4V398">
    <property type="expression patterns" value="baseline and differential"/>
</dbReference>
<dbReference type="GO" id="GO:0000139">
    <property type="term" value="C:Golgi membrane"/>
    <property type="evidence" value="ECO:0007669"/>
    <property type="project" value="UniProtKB-SubCell"/>
</dbReference>
<dbReference type="GO" id="GO:0008194">
    <property type="term" value="F:UDP-glycosyltransferase activity"/>
    <property type="evidence" value="ECO:0000314"/>
    <property type="project" value="TAIR"/>
</dbReference>
<dbReference type="GO" id="GO:0006004">
    <property type="term" value="P:fucose metabolic process"/>
    <property type="evidence" value="ECO:0007669"/>
    <property type="project" value="UniProtKB-KW"/>
</dbReference>
<dbReference type="GO" id="GO:0045489">
    <property type="term" value="P:pectin biosynthetic process"/>
    <property type="evidence" value="ECO:0007669"/>
    <property type="project" value="UniProtKB-UniPathway"/>
</dbReference>
<dbReference type="GO" id="GO:0010395">
    <property type="term" value="P:rhamnogalacturonan I metabolic process"/>
    <property type="evidence" value="ECO:0000314"/>
    <property type="project" value="TAIR"/>
</dbReference>
<dbReference type="GO" id="GO:0010214">
    <property type="term" value="P:seed coat development"/>
    <property type="evidence" value="ECO:0000315"/>
    <property type="project" value="TAIR"/>
</dbReference>
<dbReference type="CDD" id="cd11299">
    <property type="entry name" value="O-FucT_plant"/>
    <property type="match status" value="1"/>
</dbReference>
<dbReference type="InterPro" id="IPR024709">
    <property type="entry name" value="FucosylTrfase_pln"/>
</dbReference>
<dbReference type="InterPro" id="IPR019378">
    <property type="entry name" value="GDP-Fuc_O-FucTrfase"/>
</dbReference>
<dbReference type="PANTHER" id="PTHR31741">
    <property type="entry name" value="OS02G0726500 PROTEIN-RELATED"/>
    <property type="match status" value="1"/>
</dbReference>
<dbReference type="PANTHER" id="PTHR31741:SF69">
    <property type="entry name" value="RHAMNOGALACTURONAN I RHAMNOSYLTRANSFERASE 1"/>
    <property type="match status" value="1"/>
</dbReference>
<dbReference type="Pfam" id="PF10250">
    <property type="entry name" value="O-FucT"/>
    <property type="match status" value="1"/>
</dbReference>
<dbReference type="PIRSF" id="PIRSF009360">
    <property type="entry name" value="UCP009360"/>
    <property type="match status" value="1"/>
</dbReference>
<proteinExistence type="evidence at protein level"/>
<comment type="function">
    <text evidence="4">Glycosyltransferase involved in the formation of rhamnogalacturonan I (RG-I) oligosaccharides in the seed coat mucilage, which is a specialized cell wall with abundant RG-I (PubMed:30082766). Transfers the rhamnose residue from UDP-beta-L-rhamnose to RG-I oligosaccharides (PubMed:30082766). Prefers RG-I oligosaccharides with a degree of polymerization of 5 or larger than 5 (PubMed:30082766). Does not act on oligosaccharides with a degree of polymerization of 4 or smaller than 4 (PubMed:30082766). Does not require metal ions for its activity (PubMed:30082766).</text>
</comment>
<comment type="catalytic activity">
    <reaction evidence="4">
        <text>alpha-D-galacturonosyl-[(1-&gt;2)-alpha-L-rhamnosyl-(1-&gt;4)-alpha-D-galacturonosyl](n) + UDP-beta-L-rhamnose = [(1-&gt;2)-alpha-L-rhamnosyl-(1-&gt;4)-alpha-D-galacturonosyl](n+1) + UDP + H(+)</text>
        <dbReference type="Rhea" id="RHEA:55736"/>
        <dbReference type="Rhea" id="RHEA-COMP:14274"/>
        <dbReference type="Rhea" id="RHEA-COMP:14276"/>
        <dbReference type="ChEBI" id="CHEBI:15378"/>
        <dbReference type="ChEBI" id="CHEBI:58223"/>
        <dbReference type="ChEBI" id="CHEBI:83836"/>
        <dbReference type="ChEBI" id="CHEBI:139158"/>
        <dbReference type="ChEBI" id="CHEBI:139159"/>
        <dbReference type="EC" id="2.4.1.351"/>
    </reaction>
</comment>
<comment type="biophysicochemical properties">
    <phDependence>
        <text evidence="4">Optimum pH is 7.0.</text>
    </phDependence>
</comment>
<comment type="pathway">
    <text evidence="6">Glycan metabolism; pectin biosynthesis.</text>
</comment>
<comment type="subcellular location">
    <subcellularLocation>
        <location evidence="4">Golgi apparatus membrane</location>
        <topology evidence="2">Single-pass type II membrane protein</topology>
    </subcellularLocation>
</comment>
<comment type="tissue specificity">
    <text evidence="4">Highly expressed in siliques (PubMed:30082766). Expressed in stems and flowers (PubMed:30082766). Expressed at low levels in roots and rosette leaves (PubMed:30082766).</text>
</comment>
<comment type="developmental stage">
    <text evidence="4">During seed coat development, expressed from linear cotyledon to mature green stages, with a peak at the bent cotyledon stage.</text>
</comment>
<comment type="disruption phenotype">
    <text evidence="4">Reduced volume of the seed coat mucilage due to reduced levels of rhamnogalacturonan I (RG-I) in the seed coat mucilage.</text>
</comment>
<comment type="similarity">
    <text evidence="7">Belongs to the glycosyltransferase GT106 family.</text>
</comment>
<comment type="sequence caution" evidence="6">
    <conflict type="erroneous initiation">
        <sequence resource="EMBL-CDS" id="CAC01773"/>
    </conflict>
    <text>Truncated N-terminus.</text>
</comment>
<sequence length="508" mass="59041">MCKMEKFLYHRKLWEMNVKLLGESKVEKLKNSFVSRPRMSLWMIRAVTVLLLWSCFVHLMALGEMWGPRLFKGWPSCFNHHQLSTAAEMTSLPTKIALPPKRVYVNNGYLMVSCNGGLNQMRAAICDMVTVARYMNVTLIVPELDKTSFWNDPSEFKDIFDVDHFISSLRDEVRILKELPPRLKKRVELGVYHEMPPISWSNMSYYQNQILPLVKKHKVLHLNRTDTRLANNGLPVEVQKLRCRVNFNGLKFTPQIEELGRRVVKILREKGPFLVLHLRYEMDMLAFSGCSHGCNPEEEEELTRMRYAYPWWKEKVINSELKRKDGLCPLTPEETALTLTALGIDRNVQIYIAAGEIYGGQRRMKALTDAFPNVVRKETLLESSDLDFCRNHSSQMAALDYLVALESDIFVPTNDGNMARVVEGHRRFLGFKKTIQLNRRFLVKLIDEYTEGLLSWDVFSSTVKAFHSTRMGSPKRRLVIPNRPKEEDYFYANPQECLQLLDEPLRVI</sequence>
<reference key="1">
    <citation type="submission" date="2017-04" db="EMBL/GenBank/DDBJ databases">
        <title>Arabidopsis glycosyltransferases: an update.</title>
        <authorList>
            <person name="Zeng W."/>
            <person name="Gluza P."/>
            <person name="Heazlewood J."/>
        </authorList>
    </citation>
    <scope>NUCLEOTIDE SEQUENCE [MRNA]</scope>
    <source>
        <strain>cv. Columbia</strain>
    </source>
</reference>
<reference key="2">
    <citation type="journal article" date="2000" name="Nature">
        <title>Sequence and analysis of chromosome 5 of the plant Arabidopsis thaliana.</title>
        <authorList>
            <person name="Tabata S."/>
            <person name="Kaneko T."/>
            <person name="Nakamura Y."/>
            <person name="Kotani H."/>
            <person name="Kato T."/>
            <person name="Asamizu E."/>
            <person name="Miyajima N."/>
            <person name="Sasamoto S."/>
            <person name="Kimura T."/>
            <person name="Hosouchi T."/>
            <person name="Kawashima K."/>
            <person name="Kohara M."/>
            <person name="Matsumoto M."/>
            <person name="Matsuno A."/>
            <person name="Muraki A."/>
            <person name="Nakayama S."/>
            <person name="Nakazaki N."/>
            <person name="Naruo K."/>
            <person name="Okumura S."/>
            <person name="Shinpo S."/>
            <person name="Takeuchi C."/>
            <person name="Wada T."/>
            <person name="Watanabe A."/>
            <person name="Yamada M."/>
            <person name="Yasuda M."/>
            <person name="Sato S."/>
            <person name="de la Bastide M."/>
            <person name="Huang E."/>
            <person name="Spiegel L."/>
            <person name="Gnoj L."/>
            <person name="O'Shaughnessy A."/>
            <person name="Preston R."/>
            <person name="Habermann K."/>
            <person name="Murray J."/>
            <person name="Johnson D."/>
            <person name="Rohlfing T."/>
            <person name="Nelson J."/>
            <person name="Stoneking T."/>
            <person name="Pepin K."/>
            <person name="Spieth J."/>
            <person name="Sekhon M."/>
            <person name="Armstrong J."/>
            <person name="Becker M."/>
            <person name="Belter E."/>
            <person name="Cordum H."/>
            <person name="Cordes M."/>
            <person name="Courtney L."/>
            <person name="Courtney W."/>
            <person name="Dante M."/>
            <person name="Du H."/>
            <person name="Edwards J."/>
            <person name="Fryman J."/>
            <person name="Haakensen B."/>
            <person name="Lamar E."/>
            <person name="Latreille P."/>
            <person name="Leonard S."/>
            <person name="Meyer R."/>
            <person name="Mulvaney E."/>
            <person name="Ozersky P."/>
            <person name="Riley A."/>
            <person name="Strowmatt C."/>
            <person name="Wagner-McPherson C."/>
            <person name="Wollam A."/>
            <person name="Yoakum M."/>
            <person name="Bell M."/>
            <person name="Dedhia N."/>
            <person name="Parnell L."/>
            <person name="Shah R."/>
            <person name="Rodriguez M."/>
            <person name="Hoon See L."/>
            <person name="Vil D."/>
            <person name="Baker J."/>
            <person name="Kirchoff K."/>
            <person name="Toth K."/>
            <person name="King L."/>
            <person name="Bahret A."/>
            <person name="Miller B."/>
            <person name="Marra M.A."/>
            <person name="Martienssen R."/>
            <person name="McCombie W.R."/>
            <person name="Wilson R.K."/>
            <person name="Murphy G."/>
            <person name="Bancroft I."/>
            <person name="Volckaert G."/>
            <person name="Wambutt R."/>
            <person name="Duesterhoeft A."/>
            <person name="Stiekema W."/>
            <person name="Pohl T."/>
            <person name="Entian K.-D."/>
            <person name="Terryn N."/>
            <person name="Hartley N."/>
            <person name="Bent E."/>
            <person name="Johnson S."/>
            <person name="Langham S.-A."/>
            <person name="McCullagh B."/>
            <person name="Robben J."/>
            <person name="Grymonprez B."/>
            <person name="Zimmermann W."/>
            <person name="Ramsperger U."/>
            <person name="Wedler H."/>
            <person name="Balke K."/>
            <person name="Wedler E."/>
            <person name="Peters S."/>
            <person name="van Staveren M."/>
            <person name="Dirkse W."/>
            <person name="Mooijman P."/>
            <person name="Klein Lankhorst R."/>
            <person name="Weitzenegger T."/>
            <person name="Bothe G."/>
            <person name="Rose M."/>
            <person name="Hauf J."/>
            <person name="Berneiser S."/>
            <person name="Hempel S."/>
            <person name="Feldpausch M."/>
            <person name="Lamberth S."/>
            <person name="Villarroel R."/>
            <person name="Gielen J."/>
            <person name="Ardiles W."/>
            <person name="Bents O."/>
            <person name="Lemcke K."/>
            <person name="Kolesov G."/>
            <person name="Mayer K.F.X."/>
            <person name="Rudd S."/>
            <person name="Schoof H."/>
            <person name="Schueller C."/>
            <person name="Zaccaria P."/>
            <person name="Mewes H.-W."/>
            <person name="Bevan M."/>
            <person name="Fransz P.F."/>
        </authorList>
    </citation>
    <scope>NUCLEOTIDE SEQUENCE [LARGE SCALE GENOMIC DNA]</scope>
    <source>
        <strain>cv. Columbia</strain>
    </source>
</reference>
<reference key="3">
    <citation type="journal article" date="2017" name="Plant J.">
        <title>Araport11: a complete reannotation of the Arabidopsis thaliana reference genome.</title>
        <authorList>
            <person name="Cheng C.Y."/>
            <person name="Krishnakumar V."/>
            <person name="Chan A.P."/>
            <person name="Thibaud-Nissen F."/>
            <person name="Schobel S."/>
            <person name="Town C.D."/>
        </authorList>
    </citation>
    <scope>GENOME REANNOTATION</scope>
    <source>
        <strain>cv. Columbia</strain>
    </source>
</reference>
<reference key="4">
    <citation type="submission" date="2005-05" db="EMBL/GenBank/DDBJ databases">
        <title>Arabidopsis ORF clones.</title>
        <authorList>
            <person name="Cheuk R.F."/>
            <person name="Chen H."/>
            <person name="Kim C.J."/>
            <person name="Shinn P."/>
            <person name="Ecker J.R."/>
        </authorList>
    </citation>
    <scope>NUCLEOTIDE SEQUENCE [LARGE SCALE MRNA]</scope>
    <source>
        <strain>cv. Columbia</strain>
    </source>
</reference>
<reference key="5">
    <citation type="submission" date="2006-07" db="EMBL/GenBank/DDBJ databases">
        <title>Large-scale analysis of RIKEN Arabidopsis full-length (RAFL) cDNAs.</title>
        <authorList>
            <person name="Totoki Y."/>
            <person name="Seki M."/>
            <person name="Ishida J."/>
            <person name="Nakajima M."/>
            <person name="Enju A."/>
            <person name="Kamiya A."/>
            <person name="Narusaka M."/>
            <person name="Shin-i T."/>
            <person name="Nakagawa M."/>
            <person name="Sakamoto N."/>
            <person name="Oishi K."/>
            <person name="Kohara Y."/>
            <person name="Kobayashi M."/>
            <person name="Toyoda A."/>
            <person name="Sakaki Y."/>
            <person name="Sakurai T."/>
            <person name="Iida K."/>
            <person name="Akiyama K."/>
            <person name="Satou M."/>
            <person name="Toyoda T."/>
            <person name="Konagaya A."/>
            <person name="Carninci P."/>
            <person name="Kawai J."/>
            <person name="Hayashizaki Y."/>
            <person name="Shinozaki K."/>
        </authorList>
    </citation>
    <scope>NUCLEOTIDE SEQUENCE [LARGE SCALE MRNA]</scope>
    <source>
        <strain>cv. Columbia</strain>
    </source>
</reference>
<reference key="6">
    <citation type="journal article" date="2012" name="Front. Plant Sci.">
        <title>Plant glycosyltransferases beyond CAZy: a perspective on DUF families.</title>
        <authorList>
            <person name="Hansen S.F."/>
            <person name="Harholt J."/>
            <person name="Oikawa A."/>
            <person name="Scheller H.V."/>
        </authorList>
    </citation>
    <scope>GENE FAMILY</scope>
    <scope>REVIEW</scope>
</reference>
<reference key="7">
    <citation type="journal article" date="2012" name="PLoS ONE">
        <title>The FRIABLE1 gene product affects cell adhesion in Arabidopsis.</title>
        <authorList>
            <person name="Neumetzler L."/>
            <person name="Humphrey T."/>
            <person name="Lumba S."/>
            <person name="Snyder S."/>
            <person name="Yeats T.H."/>
            <person name="Usadel B."/>
            <person name="Vasilevski A."/>
            <person name="Patel J."/>
            <person name="Rose J.K."/>
            <person name="Persson S."/>
            <person name="Bonetta D."/>
        </authorList>
    </citation>
    <scope>GENE FAMILY</scope>
</reference>
<reference key="8">
    <citation type="journal article" date="2012" name="PLoS ONE">
        <title>Identification of putative rhamnogalacturonan-II specific glycosyltransferases in Arabidopsis using a combination of bioinformatics approaches.</title>
        <authorList>
            <person name="Voxeur A."/>
            <person name="Andre A."/>
            <person name="Breton C."/>
            <person name="Lerouge P."/>
        </authorList>
    </citation>
    <scope>GENE FAMILY</scope>
</reference>
<reference key="9">
    <citation type="journal article" date="2013" name="Plant J.">
        <title>Identification of an additional protein involved in mannan biosynthesis.</title>
        <authorList>
            <person name="Wang Y."/>
            <person name="Mortimer J.C."/>
            <person name="Davis J."/>
            <person name="Dupree P."/>
            <person name="Keegstra K."/>
        </authorList>
    </citation>
    <scope>GENE FAMILY</scope>
</reference>
<reference key="10">
    <citation type="journal article" date="2014" name="Plant J.">
        <title>The plant glycosyltransferase clone collection for functional genomics.</title>
        <authorList>
            <person name="Lao J."/>
            <person name="Oikawa A."/>
            <person name="Bromley J.R."/>
            <person name="McInerney P."/>
            <person name="Suttangkakul A."/>
            <person name="Smith-Moritz A.M."/>
            <person name="Plahar H."/>
            <person name="Chiu T.-Y."/>
            <person name="Gonzalez Fernandez-Nino S.M.G."/>
            <person name="Ebert B."/>
            <person name="Yang F."/>
            <person name="Christiansen K.M."/>
            <person name="Hansen S.F."/>
            <person name="Stonebloom S."/>
            <person name="Adams P.D."/>
            <person name="Ronald P.C."/>
            <person name="Hillson N.J."/>
            <person name="Hadi M.Z."/>
            <person name="Vega-Sanchez M.E."/>
            <person name="Loque D."/>
            <person name="Scheller H.V."/>
            <person name="Heazlewood J.L."/>
        </authorList>
    </citation>
    <scope>WEB RESOURCE</scope>
</reference>
<reference key="11">
    <citation type="journal article" date="2018" name="Nat. Plants">
        <title>Pectin RG-I rhamnosyltransferases represent a novel plant-specific glycosyltransferase family.</title>
        <authorList>
            <person name="Takenaka Y."/>
            <person name="Kato K."/>
            <person name="Ogawa-Ohnishi M."/>
            <person name="Tsuruhama K."/>
            <person name="Kajiura H."/>
            <person name="Yagyu K."/>
            <person name="Takeda A."/>
            <person name="Takeda Y."/>
            <person name="Kunieda T."/>
            <person name="Hara-Nishimura I."/>
            <person name="Kuroha T."/>
            <person name="Nishitani K."/>
            <person name="Matsubayashi Y."/>
            <person name="Ishimizu T."/>
        </authorList>
    </citation>
    <scope>FUNCTION</scope>
    <scope>CATALYTIC ACTIVITY</scope>
    <scope>BIOPHYSICOCHEMICAL PROPERTIES</scope>
    <scope>SUBCELLULAR LOCATION</scope>
    <scope>TISSUE SPECIFICITY</scope>
    <scope>DEVELOPMENTAL STAGE</scope>
    <scope>DISRUPTION PHENOTYPE</scope>
</reference>
<gene>
    <name evidence="5" type="primary">RRT1</name>
    <name evidence="6" type="synonym">OFUT34</name>
    <name evidence="8" type="ordered locus">At5g15740</name>
    <name evidence="10" type="ORF">F14F8.120</name>
</gene>
<keyword id="KW-0119">Carbohydrate metabolism</keyword>
<keyword id="KW-0961">Cell wall biogenesis/degradation</keyword>
<keyword id="KW-0294">Fucose metabolism</keyword>
<keyword id="KW-0325">Glycoprotein</keyword>
<keyword id="KW-0328">Glycosyltransferase</keyword>
<keyword id="KW-0333">Golgi apparatus</keyword>
<keyword id="KW-0472">Membrane</keyword>
<keyword id="KW-1185">Reference proteome</keyword>
<keyword id="KW-0735">Signal-anchor</keyword>
<keyword id="KW-0808">Transferase</keyword>
<keyword id="KW-0812">Transmembrane</keyword>
<keyword id="KW-1133">Transmembrane helix</keyword>
<name>RRT1_ARATH</name>
<feature type="chain" id="PRO_0000442096" description="Rhamnogalacturonan I rhamnosyltransferase 1">
    <location>
        <begin position="1"/>
        <end position="508"/>
    </location>
</feature>
<feature type="transmembrane region" description="Helical; Signal-anchor for type II membrane protein" evidence="6">
    <location>
        <begin position="41"/>
        <end position="63"/>
    </location>
</feature>
<feature type="binding site" evidence="1">
    <location>
        <begin position="277"/>
        <end position="279"/>
    </location>
    <ligand>
        <name>substrate</name>
    </ligand>
</feature>
<feature type="glycosylation site" description="N-linked (GlcNAc...) asparagine" evidence="3">
    <location>
        <position position="136"/>
    </location>
</feature>
<feature type="glycosylation site" description="N-linked (GlcNAc...) asparagine" evidence="3">
    <location>
        <position position="202"/>
    </location>
</feature>
<feature type="glycosylation site" description="N-linked (GlcNAc...) asparagine" evidence="3">
    <location>
        <position position="223"/>
    </location>
</feature>
<feature type="glycosylation site" description="N-linked (GlcNAc...) asparagine" evidence="3">
    <location>
        <position position="391"/>
    </location>
</feature>
<accession>Q4V398</accession>
<accession>Q9LFV2</accession>
<organism>
    <name type="scientific">Arabidopsis thaliana</name>
    <name type="common">Mouse-ear cress</name>
    <dbReference type="NCBI Taxonomy" id="3702"/>
    <lineage>
        <taxon>Eukaryota</taxon>
        <taxon>Viridiplantae</taxon>
        <taxon>Streptophyta</taxon>
        <taxon>Embryophyta</taxon>
        <taxon>Tracheophyta</taxon>
        <taxon>Spermatophyta</taxon>
        <taxon>Magnoliopsida</taxon>
        <taxon>eudicotyledons</taxon>
        <taxon>Gunneridae</taxon>
        <taxon>Pentapetalae</taxon>
        <taxon>rosids</taxon>
        <taxon>malvids</taxon>
        <taxon>Brassicales</taxon>
        <taxon>Brassicaceae</taxon>
        <taxon>Camelineae</taxon>
        <taxon>Arabidopsis</taxon>
    </lineage>
</organism>